<feature type="chain" id="PRO_0000150702" description="Olfactory receptor 10H1">
    <location>
        <begin position="1"/>
        <end position="318"/>
    </location>
</feature>
<feature type="topological domain" description="Extracellular" evidence="1">
    <location>
        <begin position="1"/>
        <end position="25"/>
    </location>
</feature>
<feature type="transmembrane region" description="Helical; Name=1" evidence="1">
    <location>
        <begin position="26"/>
        <end position="46"/>
    </location>
</feature>
<feature type="topological domain" description="Cytoplasmic" evidence="1">
    <location>
        <begin position="47"/>
        <end position="54"/>
    </location>
</feature>
<feature type="transmembrane region" description="Helical; Name=2" evidence="1">
    <location>
        <begin position="55"/>
        <end position="75"/>
    </location>
</feature>
<feature type="topological domain" description="Extracellular" evidence="1">
    <location>
        <begin position="76"/>
        <end position="99"/>
    </location>
</feature>
<feature type="transmembrane region" description="Helical; Name=3" evidence="1">
    <location>
        <begin position="100"/>
        <end position="120"/>
    </location>
</feature>
<feature type="topological domain" description="Cytoplasmic" evidence="1">
    <location>
        <begin position="121"/>
        <end position="139"/>
    </location>
</feature>
<feature type="transmembrane region" description="Helical; Name=4" evidence="1">
    <location>
        <begin position="140"/>
        <end position="160"/>
    </location>
</feature>
<feature type="topological domain" description="Extracellular" evidence="1">
    <location>
        <begin position="161"/>
        <end position="197"/>
    </location>
</feature>
<feature type="transmembrane region" description="Helical; Name=5" evidence="1">
    <location>
        <begin position="198"/>
        <end position="218"/>
    </location>
</feature>
<feature type="topological domain" description="Cytoplasmic" evidence="1">
    <location>
        <begin position="219"/>
        <end position="238"/>
    </location>
</feature>
<feature type="transmembrane region" description="Helical; Name=6" evidence="1">
    <location>
        <begin position="239"/>
        <end position="259"/>
    </location>
</feature>
<feature type="topological domain" description="Extracellular" evidence="1">
    <location>
        <begin position="260"/>
        <end position="272"/>
    </location>
</feature>
<feature type="transmembrane region" description="Helical; Name=7" evidence="1">
    <location>
        <begin position="273"/>
        <end position="293"/>
    </location>
</feature>
<feature type="topological domain" description="Cytoplasmic" evidence="1">
    <location>
        <begin position="294"/>
        <end position="318"/>
    </location>
</feature>
<feature type="glycosylation site" description="N-linked (GlcNAc...) asparagine" evidence="1">
    <location>
        <position position="5"/>
    </location>
</feature>
<feature type="disulfide bond" evidence="2">
    <location>
        <begin position="97"/>
        <end position="189"/>
    </location>
</feature>
<feature type="sequence variant" id="VAR_024127" description="In dbSNP:rs4808383.">
    <original>G</original>
    <variation>R</variation>
    <location>
        <position position="16"/>
    </location>
</feature>
<feature type="sequence variant" id="VAR_054124" description="In dbSNP:rs4808382.">
    <original>A</original>
    <variation>V</variation>
    <location>
        <position position="65"/>
    </location>
</feature>
<feature type="sequence variant" id="VAR_054125" description="In dbSNP:rs1859298.">
    <original>H</original>
    <variation>Q</variation>
    <location>
        <position position="175"/>
    </location>
</feature>
<comment type="function">
    <text evidence="3">Odorant receptor.</text>
</comment>
<comment type="subcellular location">
    <subcellularLocation>
        <location>Cell membrane</location>
        <topology>Multi-pass membrane protein</topology>
    </subcellularLocation>
</comment>
<comment type="similarity">
    <text evidence="2">Belongs to the G-protein coupled receptor 1 family.</text>
</comment>
<comment type="online information" name="Human Olfactory Receptor Data Exploratorium (HORDE)">
    <link uri="http://genome.weizmann.ac.il/horde/card/index/symbol:OR10H1"/>
</comment>
<protein>
    <recommendedName>
        <fullName>Olfactory receptor 10H1</fullName>
    </recommendedName>
    <alternativeName>
        <fullName>Olfactory receptor OR19-27</fullName>
    </alternativeName>
</protein>
<keyword id="KW-1003">Cell membrane</keyword>
<keyword id="KW-1015">Disulfide bond</keyword>
<keyword id="KW-0297">G-protein coupled receptor</keyword>
<keyword id="KW-0325">Glycoprotein</keyword>
<keyword id="KW-0472">Membrane</keyword>
<keyword id="KW-0552">Olfaction</keyword>
<keyword id="KW-0675">Receptor</keyword>
<keyword id="KW-1185">Reference proteome</keyword>
<keyword id="KW-0716">Sensory transduction</keyword>
<keyword id="KW-0807">Transducer</keyword>
<keyword id="KW-0812">Transmembrane</keyword>
<keyword id="KW-1133">Transmembrane helix</keyword>
<proteinExistence type="evidence at transcript level"/>
<name>O10H1_HUMAN</name>
<gene>
    <name type="primary">OR10H1</name>
</gene>
<dbReference type="EMBL" id="AC004510">
    <property type="protein sequence ID" value="AAC08454.1"/>
    <property type="molecule type" value="Genomic_DNA"/>
</dbReference>
<dbReference type="EMBL" id="BC130360">
    <property type="protein sequence ID" value="AAI30361.1"/>
    <property type="molecule type" value="mRNA"/>
</dbReference>
<dbReference type="EMBL" id="BC132969">
    <property type="protein sequence ID" value="AAI32970.1"/>
    <property type="molecule type" value="mRNA"/>
</dbReference>
<dbReference type="EMBL" id="AF399584">
    <property type="protein sequence ID" value="AAK95069.1"/>
    <property type="molecule type" value="Genomic_DNA"/>
</dbReference>
<dbReference type="EMBL" id="BK004210">
    <property type="protein sequence ID" value="DAA04608.1"/>
    <property type="molecule type" value="Genomic_DNA"/>
</dbReference>
<dbReference type="CCDS" id="CCDS12335.1"/>
<dbReference type="RefSeq" id="NP_039228.1">
    <property type="nucleotide sequence ID" value="NM_013940.4"/>
</dbReference>
<dbReference type="RefSeq" id="XP_011526213.1">
    <property type="nucleotide sequence ID" value="XM_011527911.1"/>
</dbReference>
<dbReference type="SMR" id="Q9Y4A9"/>
<dbReference type="BioGRID" id="117739">
    <property type="interactions" value="50"/>
</dbReference>
<dbReference type="FunCoup" id="Q9Y4A9">
    <property type="interactions" value="527"/>
</dbReference>
<dbReference type="IntAct" id="Q9Y4A9">
    <property type="interactions" value="46"/>
</dbReference>
<dbReference type="STRING" id="9606.ENSP00000493436"/>
<dbReference type="GlyCosmos" id="Q9Y4A9">
    <property type="glycosylation" value="1 site, No reported glycans"/>
</dbReference>
<dbReference type="GlyGen" id="Q9Y4A9">
    <property type="glycosylation" value="1 site"/>
</dbReference>
<dbReference type="iPTMnet" id="Q9Y4A9"/>
<dbReference type="PhosphoSitePlus" id="Q9Y4A9"/>
<dbReference type="BioMuta" id="OR10H1"/>
<dbReference type="DMDM" id="14423829"/>
<dbReference type="MassIVE" id="Q9Y4A9"/>
<dbReference type="PaxDb" id="9606-ENSP00000335596"/>
<dbReference type="PeptideAtlas" id="Q9Y4A9"/>
<dbReference type="Antibodypedia" id="54315">
    <property type="antibodies" value="97 antibodies from 21 providers"/>
</dbReference>
<dbReference type="DNASU" id="26539"/>
<dbReference type="Ensembl" id="ENST00000334920.3">
    <property type="protein sequence ID" value="ENSP00000335596.2"/>
    <property type="gene ID" value="ENSG00000186723.4"/>
</dbReference>
<dbReference type="Ensembl" id="ENST00000641419.1">
    <property type="protein sequence ID" value="ENSP00000493436.1"/>
    <property type="gene ID" value="ENSG00000186723.4"/>
</dbReference>
<dbReference type="GeneID" id="26539"/>
<dbReference type="KEGG" id="hsa:26539"/>
<dbReference type="MANE-Select" id="ENST00000641419.1">
    <property type="protein sequence ID" value="ENSP00000493436.1"/>
    <property type="RefSeq nucleotide sequence ID" value="NM_013940.4"/>
    <property type="RefSeq protein sequence ID" value="NP_039228.1"/>
</dbReference>
<dbReference type="UCSC" id="uc002nbq.3">
    <property type="organism name" value="human"/>
</dbReference>
<dbReference type="AGR" id="HGNC:8172"/>
<dbReference type="CTD" id="26539"/>
<dbReference type="DisGeNET" id="26539"/>
<dbReference type="GeneCards" id="OR10H1"/>
<dbReference type="HGNC" id="HGNC:8172">
    <property type="gene designation" value="OR10H1"/>
</dbReference>
<dbReference type="HPA" id="ENSG00000186723">
    <property type="expression patterns" value="Not detected"/>
</dbReference>
<dbReference type="neXtProt" id="NX_Q9Y4A9"/>
<dbReference type="PharmGKB" id="PA31977"/>
<dbReference type="VEuPathDB" id="HostDB:ENSG00000186723"/>
<dbReference type="eggNOG" id="ENOG502SJHK">
    <property type="taxonomic scope" value="Eukaryota"/>
</dbReference>
<dbReference type="GeneTree" id="ENSGT01120000271905"/>
<dbReference type="HOGENOM" id="CLU_012526_1_0_1"/>
<dbReference type="InParanoid" id="Q9Y4A9"/>
<dbReference type="OMA" id="MPGENCT"/>
<dbReference type="OrthoDB" id="9975554at2759"/>
<dbReference type="PAN-GO" id="Q9Y4A9">
    <property type="GO annotations" value="6 GO annotations based on evolutionary models"/>
</dbReference>
<dbReference type="PhylomeDB" id="Q9Y4A9"/>
<dbReference type="TreeFam" id="TF337675"/>
<dbReference type="PathwayCommons" id="Q9Y4A9"/>
<dbReference type="Reactome" id="R-HSA-9752946">
    <property type="pathway name" value="Expression and translocation of olfactory receptors"/>
</dbReference>
<dbReference type="SignaLink" id="Q9Y4A9"/>
<dbReference type="BioGRID-ORCS" id="26539">
    <property type="hits" value="14 hits in 672 CRISPR screens"/>
</dbReference>
<dbReference type="ChiTaRS" id="OR10H1">
    <property type="organism name" value="human"/>
</dbReference>
<dbReference type="GeneWiki" id="OR10H1"/>
<dbReference type="GenomeRNAi" id="26539"/>
<dbReference type="Pharos" id="Q9Y4A9">
    <property type="development level" value="Tdark"/>
</dbReference>
<dbReference type="PRO" id="PR:Q9Y4A9"/>
<dbReference type="Proteomes" id="UP000005640">
    <property type="component" value="Chromosome 19"/>
</dbReference>
<dbReference type="RNAct" id="Q9Y4A9">
    <property type="molecule type" value="protein"/>
</dbReference>
<dbReference type="Bgee" id="ENSG00000186723">
    <property type="expression patterns" value="Expressed in buccal mucosa cell and 10 other cell types or tissues"/>
</dbReference>
<dbReference type="ExpressionAtlas" id="Q9Y4A9">
    <property type="expression patterns" value="baseline and differential"/>
</dbReference>
<dbReference type="GO" id="GO:0005886">
    <property type="term" value="C:plasma membrane"/>
    <property type="evidence" value="ECO:0000318"/>
    <property type="project" value="GO_Central"/>
</dbReference>
<dbReference type="GO" id="GO:0004930">
    <property type="term" value="F:G protein-coupled receptor activity"/>
    <property type="evidence" value="ECO:0007669"/>
    <property type="project" value="UniProtKB-KW"/>
</dbReference>
<dbReference type="GO" id="GO:0004984">
    <property type="term" value="F:olfactory receptor activity"/>
    <property type="evidence" value="ECO:0000318"/>
    <property type="project" value="GO_Central"/>
</dbReference>
<dbReference type="GO" id="GO:0050911">
    <property type="term" value="P:detection of chemical stimulus involved in sensory perception of smell"/>
    <property type="evidence" value="ECO:0000318"/>
    <property type="project" value="GO_Central"/>
</dbReference>
<dbReference type="CDD" id="cd15225">
    <property type="entry name" value="7tmA_OR10A-like"/>
    <property type="match status" value="1"/>
</dbReference>
<dbReference type="FunFam" id="1.20.1070.10:FF:000110">
    <property type="entry name" value="olfactory receptor 10H1-like"/>
    <property type="match status" value="1"/>
</dbReference>
<dbReference type="Gene3D" id="1.20.1070.10">
    <property type="entry name" value="Rhodopsin 7-helix transmembrane proteins"/>
    <property type="match status" value="1"/>
</dbReference>
<dbReference type="InterPro" id="IPR000276">
    <property type="entry name" value="GPCR_Rhodpsn"/>
</dbReference>
<dbReference type="InterPro" id="IPR017452">
    <property type="entry name" value="GPCR_Rhodpsn_7TM"/>
</dbReference>
<dbReference type="InterPro" id="IPR000725">
    <property type="entry name" value="Olfact_rcpt"/>
</dbReference>
<dbReference type="PANTHER" id="PTHR26453">
    <property type="entry name" value="OLFACTORY RECEPTOR"/>
    <property type="match status" value="1"/>
</dbReference>
<dbReference type="Pfam" id="PF13853">
    <property type="entry name" value="7tm_4"/>
    <property type="match status" value="1"/>
</dbReference>
<dbReference type="PRINTS" id="PR00237">
    <property type="entry name" value="GPCRRHODOPSN"/>
</dbReference>
<dbReference type="PRINTS" id="PR00245">
    <property type="entry name" value="OLFACTORYR"/>
</dbReference>
<dbReference type="SUPFAM" id="SSF81321">
    <property type="entry name" value="Family A G protein-coupled receptor-like"/>
    <property type="match status" value="1"/>
</dbReference>
<dbReference type="PROSITE" id="PS50262">
    <property type="entry name" value="G_PROTEIN_RECEP_F1_2"/>
    <property type="match status" value="1"/>
</dbReference>
<reference key="1">
    <citation type="journal article" date="2004" name="Nature">
        <title>The DNA sequence and biology of human chromosome 19.</title>
        <authorList>
            <person name="Grimwood J."/>
            <person name="Gordon L.A."/>
            <person name="Olsen A.S."/>
            <person name="Terry A."/>
            <person name="Schmutz J."/>
            <person name="Lamerdin J.E."/>
            <person name="Hellsten U."/>
            <person name="Goodstein D."/>
            <person name="Couronne O."/>
            <person name="Tran-Gyamfi M."/>
            <person name="Aerts A."/>
            <person name="Altherr M."/>
            <person name="Ashworth L."/>
            <person name="Bajorek E."/>
            <person name="Black S."/>
            <person name="Branscomb E."/>
            <person name="Caenepeel S."/>
            <person name="Carrano A.V."/>
            <person name="Caoile C."/>
            <person name="Chan Y.M."/>
            <person name="Christensen M."/>
            <person name="Cleland C.A."/>
            <person name="Copeland A."/>
            <person name="Dalin E."/>
            <person name="Dehal P."/>
            <person name="Denys M."/>
            <person name="Detter J.C."/>
            <person name="Escobar J."/>
            <person name="Flowers D."/>
            <person name="Fotopulos D."/>
            <person name="Garcia C."/>
            <person name="Georgescu A.M."/>
            <person name="Glavina T."/>
            <person name="Gomez M."/>
            <person name="Gonzales E."/>
            <person name="Groza M."/>
            <person name="Hammon N."/>
            <person name="Hawkins T."/>
            <person name="Haydu L."/>
            <person name="Ho I."/>
            <person name="Huang W."/>
            <person name="Israni S."/>
            <person name="Jett J."/>
            <person name="Kadner K."/>
            <person name="Kimball H."/>
            <person name="Kobayashi A."/>
            <person name="Larionov V."/>
            <person name="Leem S.-H."/>
            <person name="Lopez F."/>
            <person name="Lou Y."/>
            <person name="Lowry S."/>
            <person name="Malfatti S."/>
            <person name="Martinez D."/>
            <person name="McCready P.M."/>
            <person name="Medina C."/>
            <person name="Morgan J."/>
            <person name="Nelson K."/>
            <person name="Nolan M."/>
            <person name="Ovcharenko I."/>
            <person name="Pitluck S."/>
            <person name="Pollard M."/>
            <person name="Popkie A.P."/>
            <person name="Predki P."/>
            <person name="Quan G."/>
            <person name="Ramirez L."/>
            <person name="Rash S."/>
            <person name="Retterer J."/>
            <person name="Rodriguez A."/>
            <person name="Rogers S."/>
            <person name="Salamov A."/>
            <person name="Salazar A."/>
            <person name="She X."/>
            <person name="Smith D."/>
            <person name="Slezak T."/>
            <person name="Solovyev V."/>
            <person name="Thayer N."/>
            <person name="Tice H."/>
            <person name="Tsai M."/>
            <person name="Ustaszewska A."/>
            <person name="Vo N."/>
            <person name="Wagner M."/>
            <person name="Wheeler J."/>
            <person name="Wu K."/>
            <person name="Xie G."/>
            <person name="Yang J."/>
            <person name="Dubchak I."/>
            <person name="Furey T.S."/>
            <person name="DeJong P."/>
            <person name="Dickson M."/>
            <person name="Gordon D."/>
            <person name="Eichler E.E."/>
            <person name="Pennacchio L.A."/>
            <person name="Richardson P."/>
            <person name="Stubbs L."/>
            <person name="Rokhsar D.S."/>
            <person name="Myers R.M."/>
            <person name="Rubin E.M."/>
            <person name="Lucas S.M."/>
        </authorList>
    </citation>
    <scope>NUCLEOTIDE SEQUENCE [LARGE SCALE GENOMIC DNA]</scope>
</reference>
<reference key="2">
    <citation type="journal article" date="2004" name="Genome Res.">
        <title>The status, quality, and expansion of the NIH full-length cDNA project: the Mammalian Gene Collection (MGC).</title>
        <authorList>
            <consortium name="The MGC Project Team"/>
        </authorList>
    </citation>
    <scope>NUCLEOTIDE SEQUENCE [LARGE SCALE MRNA]</scope>
</reference>
<reference key="3">
    <citation type="journal article" date="2002" name="Genomics">
        <title>DEFOG: a practical scheme for deciphering families of genes.</title>
        <authorList>
            <person name="Fuchs T."/>
            <person name="Malecova B."/>
            <person name="Linhart C."/>
            <person name="Sharan R."/>
            <person name="Khen M."/>
            <person name="Herwig R."/>
            <person name="Shmulevich D."/>
            <person name="Elkon R."/>
            <person name="Steinfath M."/>
            <person name="O'Brien J.K."/>
            <person name="Radelof U."/>
            <person name="Lehrach H."/>
            <person name="Lancet D."/>
            <person name="Shamir R."/>
        </authorList>
    </citation>
    <scope>NUCLEOTIDE SEQUENCE [GENOMIC DNA] OF 68-284</scope>
</reference>
<reference key="4">
    <citation type="journal article" date="2004" name="Proc. Natl. Acad. Sci. U.S.A.">
        <title>The human olfactory receptor gene family.</title>
        <authorList>
            <person name="Malnic B."/>
            <person name="Godfrey P.A."/>
            <person name="Buck L.B."/>
        </authorList>
    </citation>
    <scope>IDENTIFICATION</scope>
</reference>
<reference key="5">
    <citation type="journal article" date="2004" name="Proc. Natl. Acad. Sci. U.S.A.">
        <authorList>
            <person name="Malnic B."/>
            <person name="Godfrey P.A."/>
            <person name="Buck L.B."/>
        </authorList>
    </citation>
    <scope>ERRATUM OF PUBMED:14983052</scope>
</reference>
<sequence length="318" mass="35254">MQRANHSTVTQFILVGFSVFPHLQLMLFLLFLLMYLFTLLGNLLIMATVWSERSLHTPMYLFLCALSVSEILYTVAIIPRMLADLLSTQRSIAFLACASQMFFSFSFGFTHSFLLTVMGYDRYVAICHPLRYNVLMSPRGCACLVGCSWAGGLVMGMVVTSAIFHLAFCGHKEIHHFACHVPPLLKLACGDDVLVVAKGVGLVCITALLGCFLLILLSYAFIVAAILKIPSAEGRNKAFSTCASHLTVVVVHYGFASVIYLKPKSPQSLEGDTLMGITYTVLTPFLSPIIFSLRNKELKVAMKKTFFSKLYPEKNVMM</sequence>
<evidence type="ECO:0000255" key="1"/>
<evidence type="ECO:0000255" key="2">
    <source>
        <dbReference type="PROSITE-ProRule" id="PRU00521"/>
    </source>
</evidence>
<evidence type="ECO:0000305" key="3"/>
<organism>
    <name type="scientific">Homo sapiens</name>
    <name type="common">Human</name>
    <dbReference type="NCBI Taxonomy" id="9606"/>
    <lineage>
        <taxon>Eukaryota</taxon>
        <taxon>Metazoa</taxon>
        <taxon>Chordata</taxon>
        <taxon>Craniata</taxon>
        <taxon>Vertebrata</taxon>
        <taxon>Euteleostomi</taxon>
        <taxon>Mammalia</taxon>
        <taxon>Eutheria</taxon>
        <taxon>Euarchontoglires</taxon>
        <taxon>Primates</taxon>
        <taxon>Haplorrhini</taxon>
        <taxon>Catarrhini</taxon>
        <taxon>Hominidae</taxon>
        <taxon>Homo</taxon>
    </lineage>
</organism>
<accession>Q9Y4A9</accession>
<accession>Q6IFQ2</accession>
<accession>Q96R59</accession>